<reference key="1">
    <citation type="journal article" date="1984" name="Gene">
        <title>Nucleotide sequence of cloned DNA segments of the Haemophilus influenzae bacteriophage HP1c1.</title>
        <authorList>
            <person name="Benjamin R.C."/>
            <person name="Fitzmaurice W.P."/>
            <person name="Huang P.C."/>
            <person name="Scocca J.J."/>
        </authorList>
    </citation>
    <scope>NUCLEOTIDE SEQUENCE [GENOMIC DNA]</scope>
</reference>
<reference key="2">
    <citation type="journal article" date="1996" name="Nucleic Acids Res.">
        <title>The complete nucleotide sequence of bacteriophage HP1 DNA.</title>
        <authorList>
            <person name="Esposito D."/>
            <person name="Fitzmaurice W.P."/>
            <person name="Benjamin R.C."/>
            <person name="Goodman S.D."/>
            <person name="Waldman A.S."/>
            <person name="Scocca J.J."/>
        </authorList>
    </citation>
    <scope>NUCLEOTIDE SEQUENCE [LARGE SCALE GENOMIC DNA]</scope>
</reference>
<evidence type="ECO:0000305" key="1"/>
<feature type="chain" id="PRO_0000165339" description="Putative baseplate protein gp29">
    <location>
        <begin position="1"/>
        <end position="393"/>
    </location>
</feature>
<proteinExistence type="inferred from homology"/>
<name>BP29_BPHC1</name>
<protein>
    <recommendedName>
        <fullName>Putative baseplate protein gp29</fullName>
    </recommendedName>
    <alternativeName>
        <fullName evidence="1">Gene 29 protein</fullName>
    </alternativeName>
    <alternativeName>
        <fullName>Gp29</fullName>
    </alternativeName>
</protein>
<keyword id="KW-1185">Reference proteome</keyword>
<keyword id="KW-1226">Viral baseplate protein</keyword>
<keyword id="KW-1227">Viral tail protein</keyword>
<keyword id="KW-0946">Virion</keyword>
<organism>
    <name type="scientific">Haemophilus phage HP1 (strain HP1c1)</name>
    <name type="common">Bacteriophage HP1</name>
    <dbReference type="NCBI Taxonomy" id="1289570"/>
    <lineage>
        <taxon>Viruses</taxon>
        <taxon>Duplodnaviria</taxon>
        <taxon>Heunggongvirae</taxon>
        <taxon>Uroviricota</taxon>
        <taxon>Caudoviricetes</taxon>
        <taxon>Peduoviridae</taxon>
        <taxon>Hpunavirus</taxon>
        <taxon>Haemophilus phage HP1</taxon>
    </lineage>
</organism>
<comment type="function">
    <text evidence="1">Putative baseplate protein.</text>
</comment>
<comment type="subcellular location">
    <subcellularLocation>
        <location evidence="1">Virion</location>
    </subcellularLocation>
</comment>
<comment type="similarity">
    <text evidence="1">Belongs to the P2likevirus gpJ protein family.</text>
</comment>
<dbReference type="EMBL" id="U24159">
    <property type="protein sequence ID" value="AAB09216.1"/>
    <property type="molecule type" value="Genomic_DNA"/>
</dbReference>
<dbReference type="PIR" id="S69537">
    <property type="entry name" value="S69537"/>
</dbReference>
<dbReference type="RefSeq" id="NP_043500.1">
    <property type="nucleotide sequence ID" value="NC_001697.1"/>
</dbReference>
<dbReference type="SMR" id="P51733"/>
<dbReference type="KEGG" id="vg:1261137"/>
<dbReference type="Proteomes" id="UP000001713">
    <property type="component" value="Segment"/>
</dbReference>
<dbReference type="GO" id="GO:0098025">
    <property type="term" value="C:virus tail, baseplate"/>
    <property type="evidence" value="ECO:0007669"/>
    <property type="project" value="UniProtKB-KW"/>
</dbReference>
<dbReference type="InterPro" id="IPR006949">
    <property type="entry name" value="Baseplate_J-like"/>
</dbReference>
<dbReference type="InterPro" id="IPR052399">
    <property type="entry name" value="Phage_Baseplate_Assmbl_Protein"/>
</dbReference>
<dbReference type="PANTHER" id="PTHR37829">
    <property type="entry name" value="PHAGE-LIKE ELEMENT PBSX PROTEIN XKDT"/>
    <property type="match status" value="1"/>
</dbReference>
<dbReference type="PANTHER" id="PTHR37829:SF3">
    <property type="entry name" value="PROTEIN JAYE-RELATED"/>
    <property type="match status" value="1"/>
</dbReference>
<dbReference type="Pfam" id="PF04865">
    <property type="entry name" value="Baseplate_J"/>
    <property type="match status" value="1"/>
</dbReference>
<accession>P51733</accession>
<gene>
    <name evidence="1" type="ORF">29</name>
</gene>
<organismHost>
    <name type="scientific">Haemophilus influenzae</name>
    <dbReference type="NCBI Taxonomy" id="727"/>
</organismHost>
<sequence>MSENFKQMLAESGLPTEETQIRQEFERLTAEEGLITNTSRMSPFWRLITAIAVKPVKWLTDHLIAEILPNLFVKTAKDSWLQIQAWAVGLDFKAATKAEGVVHFTKESDVTDLTIKAGTVIQTERINDVIFRLIVTQETIIPKGVLRAPVPVIAEQAGANFNLAAGYYRILPESIAGVSAVENLEDWLTSPGADRETNDELRERYRTQFSSVGQHHIDSVYKGMIAKVAALSVDRIYFKHDAPRGPGTANAYLLLDTGVTSQPFIDKVNRYVRDEGFHGHGDDLICYAMPETKHNLTCAIYFQPSIFVGDVRKQEIVQQVENMIRCAFRENNNYGVTRTYPFTVLVGRNWARKFTTTSAKLHLSYGGKSTFKASYLFHAFSNYPSQSKSKGQK</sequence>